<proteinExistence type="evidence at transcript level"/>
<accession>Q41005</accession>
<organism>
    <name type="scientific">Pisum sativum</name>
    <name type="common">Garden pea</name>
    <name type="synonym">Lathyrus oleraceus</name>
    <dbReference type="NCBI Taxonomy" id="3888"/>
    <lineage>
        <taxon>Eukaryota</taxon>
        <taxon>Viridiplantae</taxon>
        <taxon>Streptophyta</taxon>
        <taxon>Embryophyta</taxon>
        <taxon>Tracheophyta</taxon>
        <taxon>Spermatophyta</taxon>
        <taxon>Magnoliopsida</taxon>
        <taxon>eudicotyledons</taxon>
        <taxon>Gunneridae</taxon>
        <taxon>Pentapetalae</taxon>
        <taxon>rosids</taxon>
        <taxon>fabids</taxon>
        <taxon>Fabales</taxon>
        <taxon>Fabaceae</taxon>
        <taxon>Papilionoideae</taxon>
        <taxon>50 kb inversion clade</taxon>
        <taxon>NPAAA clade</taxon>
        <taxon>Hologalegina</taxon>
        <taxon>IRL clade</taxon>
        <taxon>Fabeae</taxon>
        <taxon>Pisum</taxon>
    </lineage>
</organism>
<protein>
    <recommendedName>
        <fullName>Serine carboxypeptidase-like</fullName>
        <ecNumber>3.4.16.-</ecNumber>
    </recommendedName>
</protein>
<reference key="1">
    <citation type="journal article" date="1996" name="Eur. J. Biochem.">
        <title>Protease inhibitor studies and cloning of a serine carboxypeptidase cDNA from germinating seeds of pea (Pisum sativum L.).</title>
        <authorList>
            <person name="Jones C.G."/>
            <person name="Lycett G.W."/>
            <person name="Tucker G.A."/>
        </authorList>
    </citation>
    <scope>NUCLEOTIDE SEQUENCE [MRNA]</scope>
    <source>
        <strain>cv. Feltham First</strain>
    </source>
</reference>
<keyword id="KW-0121">Carboxypeptidase</keyword>
<keyword id="KW-1015">Disulfide bond</keyword>
<keyword id="KW-0325">Glycoprotein</keyword>
<keyword id="KW-0378">Hydrolase</keyword>
<keyword id="KW-0645">Protease</keyword>
<comment type="function">
    <text>Involved in degradation of small peptides.</text>
</comment>
<comment type="similarity">
    <text evidence="3">Belongs to the peptidase S10 family.</text>
</comment>
<evidence type="ECO:0000250" key="1"/>
<evidence type="ECO:0000255" key="2"/>
<evidence type="ECO:0000305" key="3"/>
<dbReference type="EC" id="3.4.16.-"/>
<dbReference type="EMBL" id="Z68130">
    <property type="protein sequence ID" value="CAA92216.1"/>
    <property type="molecule type" value="mRNA"/>
</dbReference>
<dbReference type="PIR" id="S62370">
    <property type="entry name" value="S62370"/>
</dbReference>
<dbReference type="SMR" id="Q41005"/>
<dbReference type="MEROPS" id="S10.009"/>
<dbReference type="GO" id="GO:0005773">
    <property type="term" value="C:vacuole"/>
    <property type="evidence" value="ECO:0007669"/>
    <property type="project" value="TreeGrafter"/>
</dbReference>
<dbReference type="GO" id="GO:0004185">
    <property type="term" value="F:serine-type carboxypeptidase activity"/>
    <property type="evidence" value="ECO:0007669"/>
    <property type="project" value="InterPro"/>
</dbReference>
<dbReference type="GO" id="GO:0006508">
    <property type="term" value="P:proteolysis"/>
    <property type="evidence" value="ECO:0007669"/>
    <property type="project" value="UniProtKB-KW"/>
</dbReference>
<dbReference type="Gene3D" id="1.10.287.410">
    <property type="match status" value="1"/>
</dbReference>
<dbReference type="Gene3D" id="3.40.50.1820">
    <property type="entry name" value="alpha/beta hydrolase"/>
    <property type="match status" value="1"/>
</dbReference>
<dbReference type="InterPro" id="IPR029058">
    <property type="entry name" value="AB_hydrolase_fold"/>
</dbReference>
<dbReference type="InterPro" id="IPR001563">
    <property type="entry name" value="Peptidase_S10"/>
</dbReference>
<dbReference type="InterPro" id="IPR033124">
    <property type="entry name" value="Ser_caboxypep_his_AS"/>
</dbReference>
<dbReference type="PANTHER" id="PTHR11802:SF113">
    <property type="entry name" value="SERINE CARBOXYPEPTIDASE CTSA-4.1"/>
    <property type="match status" value="1"/>
</dbReference>
<dbReference type="PANTHER" id="PTHR11802">
    <property type="entry name" value="SERINE PROTEASE FAMILY S10 SERINE CARBOXYPEPTIDASE"/>
    <property type="match status" value="1"/>
</dbReference>
<dbReference type="Pfam" id="PF00450">
    <property type="entry name" value="Peptidase_S10"/>
    <property type="match status" value="1"/>
</dbReference>
<dbReference type="SUPFAM" id="SSF53474">
    <property type="entry name" value="alpha/beta-Hydrolases"/>
    <property type="match status" value="1"/>
</dbReference>
<dbReference type="PROSITE" id="PS00560">
    <property type="entry name" value="CARBOXYPEPT_SER_HIS"/>
    <property type="match status" value="1"/>
</dbReference>
<feature type="chain" id="PRO_0000120566" description="Serine carboxypeptidase-like">
    <location>
        <begin position="1" status="less than"/>
        <end position="286"/>
    </location>
</feature>
<feature type="active site" evidence="1">
    <location>
        <position position="4"/>
    </location>
</feature>
<feature type="active site" evidence="1">
    <location>
        <position position="193"/>
    </location>
</feature>
<feature type="active site" evidence="1">
    <location>
        <position position="250"/>
    </location>
</feature>
<feature type="binding site" evidence="1">
    <location>
        <position position="196"/>
    </location>
    <ligand>
        <name>substrate</name>
    </ligand>
</feature>
<feature type="glycosylation site" description="N-linked (GlcNAc...) asparagine" evidence="2">
    <location>
        <position position="227"/>
    </location>
</feature>
<feature type="disulfide bond" evidence="1">
    <location>
        <begin position="83"/>
        <end position="98"/>
    </location>
</feature>
<feature type="disulfide bond" evidence="1">
    <location>
        <begin position="121"/>
        <end position="126"/>
    </location>
</feature>
<feature type="non-terminal residue">
    <location>
        <position position="1"/>
    </location>
</feature>
<name>CBPX_PEA</name>
<sequence length="286" mass="31343">TGESYAGHYIPALASRIHQGNQANEGIHINLKGLAIGNGLTNPAIQYKGYPDYALDMGIITQTTHDLLGKVLVPACELAIKLCGTNGKVSCLTANVACNLIFSDIMLHAGGVNYYDIRKKCEGSLCYDFSNMEKFLNQESVRDSLGVGKIRFVSCSTEVYMAMLVDWMRNLEVGIPLLLEDGINLLIYAGEYDLICNWLGNSRWVHAMKWSGQKEFVASSDVPFVVNGSQAGLLKSYGPLSFLKVHDAGHMVPMDQPKAALEMVKQWTRGTLAESIDGEEKLVADM</sequence>